<reference key="1">
    <citation type="journal article" date="2004" name="J. Mol. Microbiol. Biotechnol.">
        <title>The complete genome sequence of Bacillus licheniformis DSM13, an organism with great industrial potential.</title>
        <authorList>
            <person name="Veith B."/>
            <person name="Herzberg C."/>
            <person name="Steckel S."/>
            <person name="Feesche J."/>
            <person name="Maurer K.H."/>
            <person name="Ehrenreich P."/>
            <person name="Baeumer S."/>
            <person name="Henne A."/>
            <person name="Liesegang H."/>
            <person name="Merkl R."/>
            <person name="Ehrenreich A."/>
            <person name="Gottschalk G."/>
        </authorList>
    </citation>
    <scope>NUCLEOTIDE SEQUENCE [LARGE SCALE GENOMIC DNA]</scope>
    <source>
        <strain>ATCC 14580 / DSM 13 / JCM 2505 / CCUG 7422 / NBRC 12200 / NCIMB 9375 / NCTC 10341 / NRRL NRS-1264 / Gibson 46</strain>
    </source>
</reference>
<reference key="2">
    <citation type="journal article" date="2004" name="Genome Biol.">
        <title>Complete genome sequence of the industrial bacterium Bacillus licheniformis and comparisons with closely related Bacillus species.</title>
        <authorList>
            <person name="Rey M.W."/>
            <person name="Ramaiya P."/>
            <person name="Nelson B.A."/>
            <person name="Brody-Karpin S.D."/>
            <person name="Zaretsky E.J."/>
            <person name="Tang M."/>
            <person name="Lopez de Leon A."/>
            <person name="Xiang H."/>
            <person name="Gusti V."/>
            <person name="Clausen I.G."/>
            <person name="Olsen P.B."/>
            <person name="Rasmussen M.D."/>
            <person name="Andersen J.T."/>
            <person name="Joergensen P.L."/>
            <person name="Larsen T.S."/>
            <person name="Sorokin A."/>
            <person name="Bolotin A."/>
            <person name="Lapidus A."/>
            <person name="Galleron N."/>
            <person name="Ehrlich S.D."/>
            <person name="Berka R.M."/>
        </authorList>
    </citation>
    <scope>NUCLEOTIDE SEQUENCE [LARGE SCALE GENOMIC DNA]</scope>
    <source>
        <strain>ATCC 14580 / DSM 13 / JCM 2505 / CCUG 7422 / NBRC 12200 / NCIMB 9375 / NCTC 10341 / NRRL NRS-1264 / Gibson 46</strain>
    </source>
</reference>
<keyword id="KW-0067">ATP-binding</keyword>
<keyword id="KW-0418">Kinase</keyword>
<keyword id="KW-0547">Nucleotide-binding</keyword>
<keyword id="KW-1185">Reference proteome</keyword>
<keyword id="KW-0723">Serine/threonine-protein kinase</keyword>
<keyword id="KW-0749">Sporulation</keyword>
<keyword id="KW-0808">Transferase</keyword>
<organism>
    <name type="scientific">Bacillus licheniformis (strain ATCC 14580 / DSM 13 / JCM 2505 / CCUG 7422 / NBRC 12200 / NCIMB 9375 / NCTC 10341 / NRRL NRS-1264 / Gibson 46)</name>
    <dbReference type="NCBI Taxonomy" id="279010"/>
    <lineage>
        <taxon>Bacteria</taxon>
        <taxon>Bacillati</taxon>
        <taxon>Bacillota</taxon>
        <taxon>Bacilli</taxon>
        <taxon>Bacillales</taxon>
        <taxon>Bacillaceae</taxon>
        <taxon>Bacillus</taxon>
    </lineage>
</organism>
<feature type="chain" id="PRO_0000203556" description="Anti-sigma F factor">
    <location>
        <begin position="1"/>
        <end position="146"/>
    </location>
</feature>
<name>SP2AB_BACLD</name>
<protein>
    <recommendedName>
        <fullName evidence="1">Anti-sigma F factor</fullName>
        <ecNumber evidence="1">2.7.11.1</ecNumber>
    </recommendedName>
    <alternativeName>
        <fullName evidence="1">Stage II sporulation protein AB</fullName>
    </alternativeName>
</protein>
<dbReference type="EC" id="2.7.11.1" evidence="1"/>
<dbReference type="EMBL" id="AE017333">
    <property type="protein sequence ID" value="AAU41371.1"/>
    <property type="molecule type" value="Genomic_DNA"/>
</dbReference>
<dbReference type="EMBL" id="CP000002">
    <property type="protein sequence ID" value="AAU24016.1"/>
    <property type="molecule type" value="Genomic_DNA"/>
</dbReference>
<dbReference type="RefSeq" id="WP_009327954.1">
    <property type="nucleotide sequence ID" value="NC_006322.1"/>
</dbReference>
<dbReference type="SMR" id="Q65HU3"/>
<dbReference type="STRING" id="279010.BL00777"/>
<dbReference type="GeneID" id="92860910"/>
<dbReference type="KEGG" id="bld:BLi02496"/>
<dbReference type="KEGG" id="bli:BL00777"/>
<dbReference type="eggNOG" id="COG2172">
    <property type="taxonomic scope" value="Bacteria"/>
</dbReference>
<dbReference type="HOGENOM" id="CLU_090336_11_0_9"/>
<dbReference type="Proteomes" id="UP000000606">
    <property type="component" value="Chromosome"/>
</dbReference>
<dbReference type="GO" id="GO:0005524">
    <property type="term" value="F:ATP binding"/>
    <property type="evidence" value="ECO:0007669"/>
    <property type="project" value="UniProtKB-KW"/>
</dbReference>
<dbReference type="GO" id="GO:0106310">
    <property type="term" value="F:protein serine kinase activity"/>
    <property type="evidence" value="ECO:0007669"/>
    <property type="project" value="RHEA"/>
</dbReference>
<dbReference type="GO" id="GO:0004674">
    <property type="term" value="F:protein serine/threonine kinase activity"/>
    <property type="evidence" value="ECO:0007669"/>
    <property type="project" value="UniProtKB-KW"/>
</dbReference>
<dbReference type="GO" id="GO:0016989">
    <property type="term" value="F:sigma factor antagonist activity"/>
    <property type="evidence" value="ECO:0007669"/>
    <property type="project" value="InterPro"/>
</dbReference>
<dbReference type="GO" id="GO:0030436">
    <property type="term" value="P:asexual sporulation"/>
    <property type="evidence" value="ECO:0007669"/>
    <property type="project" value="UniProtKB-UniRule"/>
</dbReference>
<dbReference type="GO" id="GO:0042174">
    <property type="term" value="P:negative regulation of sporulation resulting in formation of a cellular spore"/>
    <property type="evidence" value="ECO:0007669"/>
    <property type="project" value="InterPro"/>
</dbReference>
<dbReference type="GO" id="GO:0030435">
    <property type="term" value="P:sporulation resulting in formation of a cellular spore"/>
    <property type="evidence" value="ECO:0007669"/>
    <property type="project" value="UniProtKB-KW"/>
</dbReference>
<dbReference type="Gene3D" id="3.30.565.10">
    <property type="entry name" value="Histidine kinase-like ATPase, C-terminal domain"/>
    <property type="match status" value="1"/>
</dbReference>
<dbReference type="HAMAP" id="MF_00637">
    <property type="entry name" value="Anti_sigma_F"/>
    <property type="match status" value="1"/>
</dbReference>
<dbReference type="InterPro" id="IPR050267">
    <property type="entry name" value="Anti-sigma-factor_SerPK"/>
</dbReference>
<dbReference type="InterPro" id="IPR010194">
    <property type="entry name" value="Anti-sigma_F"/>
</dbReference>
<dbReference type="InterPro" id="IPR036890">
    <property type="entry name" value="HATPase_C_sf"/>
</dbReference>
<dbReference type="NCBIfam" id="TIGR01925">
    <property type="entry name" value="spIIAB"/>
    <property type="match status" value="1"/>
</dbReference>
<dbReference type="PANTHER" id="PTHR35526:SF3">
    <property type="entry name" value="ANTI-SIGMA-F FACTOR RSBW"/>
    <property type="match status" value="1"/>
</dbReference>
<dbReference type="PANTHER" id="PTHR35526">
    <property type="entry name" value="ANTI-SIGMA-F FACTOR RSBW-RELATED"/>
    <property type="match status" value="1"/>
</dbReference>
<dbReference type="Pfam" id="PF13581">
    <property type="entry name" value="HATPase_c_2"/>
    <property type="match status" value="1"/>
</dbReference>
<dbReference type="SMART" id="SM00387">
    <property type="entry name" value="HATPase_c"/>
    <property type="match status" value="1"/>
</dbReference>
<dbReference type="SUPFAM" id="SSF55874">
    <property type="entry name" value="ATPase domain of HSP90 chaperone/DNA topoisomerase II/histidine kinase"/>
    <property type="match status" value="1"/>
</dbReference>
<comment type="function">
    <text evidence="1">Binds to sigma F and blocks its ability to form an RNA polymerase holoenzyme (E-sigma F). Phosphorylates SpoIIAA on a serine residue. This phosphorylation may enable SpoIIAA to act as an anti-anti-sigma factor that counteracts SpoIIAB and thus releases sigma F from inhibition.</text>
</comment>
<comment type="catalytic activity">
    <reaction evidence="1">
        <text>L-seryl-[protein] + ATP = O-phospho-L-seryl-[protein] + ADP + H(+)</text>
        <dbReference type="Rhea" id="RHEA:17989"/>
        <dbReference type="Rhea" id="RHEA-COMP:9863"/>
        <dbReference type="Rhea" id="RHEA-COMP:11604"/>
        <dbReference type="ChEBI" id="CHEBI:15378"/>
        <dbReference type="ChEBI" id="CHEBI:29999"/>
        <dbReference type="ChEBI" id="CHEBI:30616"/>
        <dbReference type="ChEBI" id="CHEBI:83421"/>
        <dbReference type="ChEBI" id="CHEBI:456216"/>
        <dbReference type="EC" id="2.7.11.1"/>
    </reaction>
</comment>
<comment type="catalytic activity">
    <reaction evidence="1">
        <text>L-threonyl-[protein] + ATP = O-phospho-L-threonyl-[protein] + ADP + H(+)</text>
        <dbReference type="Rhea" id="RHEA:46608"/>
        <dbReference type="Rhea" id="RHEA-COMP:11060"/>
        <dbReference type="Rhea" id="RHEA-COMP:11605"/>
        <dbReference type="ChEBI" id="CHEBI:15378"/>
        <dbReference type="ChEBI" id="CHEBI:30013"/>
        <dbReference type="ChEBI" id="CHEBI:30616"/>
        <dbReference type="ChEBI" id="CHEBI:61977"/>
        <dbReference type="ChEBI" id="CHEBI:456216"/>
        <dbReference type="EC" id="2.7.11.1"/>
    </reaction>
</comment>
<comment type="similarity">
    <text evidence="1">Belongs to the anti-sigma-factor family.</text>
</comment>
<evidence type="ECO:0000255" key="1">
    <source>
        <dbReference type="HAMAP-Rule" id="MF_00637"/>
    </source>
</evidence>
<sequence length="146" mass="16198">MKNEMNIQFTALSQNESFARVTVAAFIAQLDPTMDELTEIKTVVSEAVTNAIIHGYENSGQGNVYISVTLEDHIVYLTIRDEGVGIPNLEEARQPLFTTKPELERSGMGFTIMENFMDDISIDSSPEMGTTIHLTKHLSKSKALCN</sequence>
<gene>
    <name evidence="1" type="primary">spoIIAB</name>
    <name type="ordered locus">BLi02496</name>
    <name type="ordered locus">BL00777</name>
</gene>
<accession>Q65HU3</accession>
<accession>Q62T93</accession>
<proteinExistence type="inferred from homology"/>